<protein>
    <recommendedName>
        <fullName evidence="1">Metallophosphoesterase 1</fullName>
        <ecNumber evidence="1">3.1.-.-</ecNumber>
    </recommendedName>
    <alternativeName>
        <fullName>Post-GPI attachment to proteins factor 5</fullName>
    </alternativeName>
</protein>
<accession>Q5RET5</accession>
<evidence type="ECO:0000250" key="1">
    <source>
        <dbReference type="UniProtKB" id="Q53F39"/>
    </source>
</evidence>
<evidence type="ECO:0000255" key="2"/>
<evidence type="ECO:0000305" key="3"/>
<sequence>MAMIELEFGRQNFHPLKKKSPLLLKLIAVVFAVLLFCEFLIYYLAIFQCNWPEVKTTASDGEQATREPVLKAMFLADTHLLGEVLGHWPDKLRREWQMERAFQTALWLLQPEVVFILGDIFDEGKWSTPEAWVNDVERFQKMFRHPSHVQLKVVAGNHDIGFHYEMNTYKVERFEKVFSSERLFSWKGINFVMVNSVALNGDGCGICSETEAELIEVSHRLNCSREQARGSSRCGPGPLLPMSAPVLLQHYPLYRRSDANCSGEDAAPPEERDIPFKENYDVLSREASQKLLRWFQPRLVLSGHTHSACEVHHGGRVPELSVPSFSWRNRNNPSFIMGSITPTDYTLSKCYLPREDVVLIIYCGMVGFLVVLTLTHFGLLASPFLAGLNLLRKRKTR</sequence>
<proteinExistence type="evidence at transcript level"/>
<comment type="function">
    <text evidence="1">Metallophosphoesterase that catalyzes the removal of a side-chain ethanolamine-phosphate (EtNP) from the second mannose of the GPI-anchor protein intermediate. Participates in the glycan remodeling steps of GPI-anchor maturation to allow an efficient transport of GPI-anchor proteins from the endoplasmic reticulum to the Golgi.</text>
</comment>
<comment type="cofactor">
    <cofactor evidence="1">
        <name>Mn(2+)</name>
        <dbReference type="ChEBI" id="CHEBI:29035"/>
    </cofactor>
    <text evidence="1">Binds 2 manganese ions per subunit.</text>
</comment>
<comment type="subunit">
    <text evidence="1">Interacts with GPI-anchor proteins (via the GPI portion). Interacts with TMED10.</text>
</comment>
<comment type="subcellular location">
    <subcellularLocation>
        <location evidence="1">Endoplasmic reticulum-Golgi intermediate compartment membrane</location>
        <topology evidence="2">Multi-pass membrane protein</topology>
    </subcellularLocation>
    <text evidence="1">Also localizes to endoplasmic reticulum exit site.</text>
</comment>
<comment type="domain">
    <text evidence="1">The di-lysine motif (KxKxx) acts as an endoplasmic reticulum retrieval signal.</text>
</comment>
<comment type="similarity">
    <text evidence="3">Belongs to the metallophosphoesterase superfamily. MPPE1 family.</text>
</comment>
<name>MPPE1_PONAB</name>
<dbReference type="EC" id="3.1.-.-" evidence="1"/>
<dbReference type="EMBL" id="CR857431">
    <property type="protein sequence ID" value="CAH89722.1"/>
    <property type="molecule type" value="mRNA"/>
</dbReference>
<dbReference type="RefSeq" id="NP_001124783.1">
    <property type="nucleotide sequence ID" value="NM_001131311.1"/>
</dbReference>
<dbReference type="FunCoup" id="Q5RET5">
    <property type="interactions" value="1979"/>
</dbReference>
<dbReference type="STRING" id="9601.ENSPPYP00000010093"/>
<dbReference type="GeneID" id="100171636"/>
<dbReference type="KEGG" id="pon:100171636"/>
<dbReference type="CTD" id="65258"/>
<dbReference type="eggNOG" id="KOG3662">
    <property type="taxonomic scope" value="Eukaryota"/>
</dbReference>
<dbReference type="InParanoid" id="Q5RET5"/>
<dbReference type="OrthoDB" id="9984693at2759"/>
<dbReference type="Proteomes" id="UP000001595">
    <property type="component" value="Unplaced"/>
</dbReference>
<dbReference type="GO" id="GO:0070971">
    <property type="term" value="C:endoplasmic reticulum exit site"/>
    <property type="evidence" value="ECO:0000250"/>
    <property type="project" value="UniProtKB"/>
</dbReference>
<dbReference type="GO" id="GO:0033116">
    <property type="term" value="C:endoplasmic reticulum-Golgi intermediate compartment membrane"/>
    <property type="evidence" value="ECO:0007669"/>
    <property type="project" value="UniProtKB-SubCell"/>
</dbReference>
<dbReference type="GO" id="GO:0005794">
    <property type="term" value="C:Golgi apparatus"/>
    <property type="evidence" value="ECO:0007669"/>
    <property type="project" value="UniProtKB-SubCell"/>
</dbReference>
<dbReference type="GO" id="GO:0062050">
    <property type="term" value="F:GPI-mannose ethanolamine phosphate phosphodiesterase activity"/>
    <property type="evidence" value="ECO:0000250"/>
    <property type="project" value="UniProtKB"/>
</dbReference>
<dbReference type="GO" id="GO:0030145">
    <property type="term" value="F:manganese ion binding"/>
    <property type="evidence" value="ECO:0000250"/>
    <property type="project" value="UniProtKB"/>
</dbReference>
<dbReference type="GO" id="GO:0006888">
    <property type="term" value="P:endoplasmic reticulum to Golgi vesicle-mediated transport"/>
    <property type="evidence" value="ECO:0000250"/>
    <property type="project" value="UniProtKB"/>
</dbReference>
<dbReference type="GO" id="GO:0006506">
    <property type="term" value="P:GPI anchor biosynthetic process"/>
    <property type="evidence" value="ECO:0000250"/>
    <property type="project" value="UniProtKB"/>
</dbReference>
<dbReference type="CDD" id="cd08165">
    <property type="entry name" value="MPP_MPPE1"/>
    <property type="match status" value="1"/>
</dbReference>
<dbReference type="FunFam" id="3.60.21.10:FF:000022">
    <property type="entry name" value="Putative metallophosphoesterase 1"/>
    <property type="match status" value="1"/>
</dbReference>
<dbReference type="Gene3D" id="3.60.21.10">
    <property type="match status" value="1"/>
</dbReference>
<dbReference type="InterPro" id="IPR004843">
    <property type="entry name" value="Calcineurin-like_PHP_ApaH"/>
</dbReference>
<dbReference type="InterPro" id="IPR029052">
    <property type="entry name" value="Metallo-depent_PP-like"/>
</dbReference>
<dbReference type="InterPro" id="IPR039541">
    <property type="entry name" value="MPP_MPPE1"/>
</dbReference>
<dbReference type="InterPro" id="IPR033308">
    <property type="entry name" value="PGAP5/Cdc1/Ted1"/>
</dbReference>
<dbReference type="PANTHER" id="PTHR13315">
    <property type="entry name" value="METALLO PHOSPHOESTERASE RELATED"/>
    <property type="match status" value="1"/>
</dbReference>
<dbReference type="PANTHER" id="PTHR13315:SF0">
    <property type="entry name" value="METALLOPHOSPHOESTERASE 1"/>
    <property type="match status" value="1"/>
</dbReference>
<dbReference type="Pfam" id="PF00149">
    <property type="entry name" value="Metallophos"/>
    <property type="match status" value="1"/>
</dbReference>
<dbReference type="SUPFAM" id="SSF56300">
    <property type="entry name" value="Metallo-dependent phosphatases"/>
    <property type="match status" value="1"/>
</dbReference>
<organism>
    <name type="scientific">Pongo abelii</name>
    <name type="common">Sumatran orangutan</name>
    <name type="synonym">Pongo pygmaeus abelii</name>
    <dbReference type="NCBI Taxonomy" id="9601"/>
    <lineage>
        <taxon>Eukaryota</taxon>
        <taxon>Metazoa</taxon>
        <taxon>Chordata</taxon>
        <taxon>Craniata</taxon>
        <taxon>Vertebrata</taxon>
        <taxon>Euteleostomi</taxon>
        <taxon>Mammalia</taxon>
        <taxon>Eutheria</taxon>
        <taxon>Euarchontoglires</taxon>
        <taxon>Primates</taxon>
        <taxon>Haplorrhini</taxon>
        <taxon>Catarrhini</taxon>
        <taxon>Hominidae</taxon>
        <taxon>Pongo</taxon>
    </lineage>
</organism>
<keyword id="KW-0931">ER-Golgi transport</keyword>
<keyword id="KW-0337">GPI-anchor biosynthesis</keyword>
<keyword id="KW-0378">Hydrolase</keyword>
<keyword id="KW-0464">Manganese</keyword>
<keyword id="KW-0472">Membrane</keyword>
<keyword id="KW-0479">Metal-binding</keyword>
<keyword id="KW-1185">Reference proteome</keyword>
<keyword id="KW-0812">Transmembrane</keyword>
<keyword id="KW-1133">Transmembrane helix</keyword>
<keyword id="KW-0813">Transport</keyword>
<gene>
    <name evidence="1" type="primary">MPPE1</name>
    <name evidence="1" type="synonym">PGAP5</name>
</gene>
<feature type="chain" id="PRO_0000315730" description="Metallophosphoesterase 1">
    <location>
        <begin position="1"/>
        <end position="397"/>
    </location>
</feature>
<feature type="transmembrane region" description="Helical" evidence="2">
    <location>
        <begin position="27"/>
        <end position="47"/>
    </location>
</feature>
<feature type="transmembrane region" description="Helical" evidence="2">
    <location>
        <begin position="357"/>
        <end position="377"/>
    </location>
</feature>
<feature type="short sequence motif" description="Di-lysine motif" evidence="1">
    <location>
        <begin position="393"/>
        <end position="397"/>
    </location>
</feature>
<feature type="binding site" evidence="1">
    <location>
        <position position="77"/>
    </location>
    <ligand>
        <name>a divalent metal cation</name>
        <dbReference type="ChEBI" id="CHEBI:60240"/>
        <label>2</label>
    </ligand>
</feature>
<feature type="binding site" evidence="1">
    <location>
        <position position="119"/>
    </location>
    <ligand>
        <name>a divalent metal cation</name>
        <dbReference type="ChEBI" id="CHEBI:60240"/>
        <label>1</label>
    </ligand>
</feature>
<feature type="binding site" evidence="1">
    <location>
        <position position="119"/>
    </location>
    <ligand>
        <name>a divalent metal cation</name>
        <dbReference type="ChEBI" id="CHEBI:60240"/>
        <label>2</label>
    </ligand>
</feature>
<feature type="binding site" evidence="1">
    <location>
        <position position="157"/>
    </location>
    <ligand>
        <name>a divalent metal cation</name>
        <dbReference type="ChEBI" id="CHEBI:60240"/>
        <label>1</label>
    </ligand>
</feature>
<feature type="binding site" evidence="1">
    <location>
        <position position="250"/>
    </location>
    <ligand>
        <name>a divalent metal cation</name>
        <dbReference type="ChEBI" id="CHEBI:60240"/>
        <label>1</label>
    </ligand>
</feature>
<feature type="binding site" evidence="1">
    <location>
        <position position="250"/>
    </location>
    <ligand>
        <name>a divalent metal cation</name>
        <dbReference type="ChEBI" id="CHEBI:60240"/>
        <label>2</label>
    </ligand>
</feature>
<feature type="binding site" evidence="1">
    <location>
        <position position="304"/>
    </location>
    <ligand>
        <name>a divalent metal cation</name>
        <dbReference type="ChEBI" id="CHEBI:60240"/>
        <label>1</label>
    </ligand>
</feature>
<feature type="binding site" evidence="1">
    <location>
        <position position="306"/>
    </location>
    <ligand>
        <name>a divalent metal cation</name>
        <dbReference type="ChEBI" id="CHEBI:60240"/>
        <label>2</label>
    </ligand>
</feature>
<reference key="1">
    <citation type="submission" date="2004-11" db="EMBL/GenBank/DDBJ databases">
        <authorList>
            <consortium name="The German cDNA consortium"/>
        </authorList>
    </citation>
    <scope>NUCLEOTIDE SEQUENCE [LARGE SCALE MRNA]</scope>
    <source>
        <tissue>Kidney</tissue>
    </source>
</reference>